<sequence>MPMIDVPDNNAFDVAMRRFKRACEKAGILSKLRQIEYYEKPTSKRKRKRAAAVKRYAKKLQKEQEALERERTRY</sequence>
<reference key="1">
    <citation type="journal article" date="2009" name="Infect. Immun.">
        <title>Comparative genomics reveal extensive transposon-mediated genomic plasticity and diversity among potential effector proteins within the genus Coxiella.</title>
        <authorList>
            <person name="Beare P.A."/>
            <person name="Unsworth N."/>
            <person name="Andoh M."/>
            <person name="Voth D.E."/>
            <person name="Omsland A."/>
            <person name="Gilk S.D."/>
            <person name="Williams K.P."/>
            <person name="Sobral B.W."/>
            <person name="Kupko J.J. III"/>
            <person name="Porcella S.F."/>
            <person name="Samuel J.E."/>
            <person name="Heinzen R.A."/>
        </authorList>
    </citation>
    <scope>NUCLEOTIDE SEQUENCE [LARGE SCALE GENOMIC DNA]</scope>
    <source>
        <strain>Dugway 5J108-111</strain>
    </source>
</reference>
<keyword id="KW-0687">Ribonucleoprotein</keyword>
<keyword id="KW-0689">Ribosomal protein</keyword>
<accession>A9KDP4</accession>
<feature type="chain" id="PRO_1000079402" description="Small ribosomal subunit protein bS21">
    <location>
        <begin position="1"/>
        <end position="74"/>
    </location>
</feature>
<dbReference type="EMBL" id="CP000733">
    <property type="protein sequence ID" value="ABS77864.2"/>
    <property type="status" value="ALT_INIT"/>
    <property type="molecule type" value="Genomic_DNA"/>
</dbReference>
<dbReference type="RefSeq" id="WP_005772127.1">
    <property type="nucleotide sequence ID" value="NC_009727.1"/>
</dbReference>
<dbReference type="SMR" id="A9KDP4"/>
<dbReference type="KEGG" id="cbd:CBUD_0396"/>
<dbReference type="HOGENOM" id="CLU_159258_1_1_6"/>
<dbReference type="Proteomes" id="UP000008555">
    <property type="component" value="Chromosome"/>
</dbReference>
<dbReference type="GO" id="GO:1990904">
    <property type="term" value="C:ribonucleoprotein complex"/>
    <property type="evidence" value="ECO:0007669"/>
    <property type="project" value="UniProtKB-KW"/>
</dbReference>
<dbReference type="GO" id="GO:0005840">
    <property type="term" value="C:ribosome"/>
    <property type="evidence" value="ECO:0007669"/>
    <property type="project" value="UniProtKB-KW"/>
</dbReference>
<dbReference type="GO" id="GO:0003735">
    <property type="term" value="F:structural constituent of ribosome"/>
    <property type="evidence" value="ECO:0007669"/>
    <property type="project" value="InterPro"/>
</dbReference>
<dbReference type="GO" id="GO:0006412">
    <property type="term" value="P:translation"/>
    <property type="evidence" value="ECO:0007669"/>
    <property type="project" value="UniProtKB-UniRule"/>
</dbReference>
<dbReference type="Gene3D" id="1.20.5.1150">
    <property type="entry name" value="Ribosomal protein S8"/>
    <property type="match status" value="1"/>
</dbReference>
<dbReference type="HAMAP" id="MF_00358">
    <property type="entry name" value="Ribosomal_bS21"/>
    <property type="match status" value="1"/>
</dbReference>
<dbReference type="InterPro" id="IPR001911">
    <property type="entry name" value="Ribosomal_bS21"/>
</dbReference>
<dbReference type="InterPro" id="IPR038380">
    <property type="entry name" value="Ribosomal_bS21_sf"/>
</dbReference>
<dbReference type="NCBIfam" id="TIGR00030">
    <property type="entry name" value="S21p"/>
    <property type="match status" value="1"/>
</dbReference>
<dbReference type="PANTHER" id="PTHR21109">
    <property type="entry name" value="MITOCHONDRIAL 28S RIBOSOMAL PROTEIN S21"/>
    <property type="match status" value="1"/>
</dbReference>
<dbReference type="PANTHER" id="PTHR21109:SF22">
    <property type="entry name" value="SMALL RIBOSOMAL SUBUNIT PROTEIN BS21"/>
    <property type="match status" value="1"/>
</dbReference>
<dbReference type="Pfam" id="PF01165">
    <property type="entry name" value="Ribosomal_S21"/>
    <property type="match status" value="1"/>
</dbReference>
<dbReference type="PRINTS" id="PR00976">
    <property type="entry name" value="RIBOSOMALS21"/>
</dbReference>
<organism>
    <name type="scientific">Coxiella burnetii (strain Dugway 5J108-111)</name>
    <dbReference type="NCBI Taxonomy" id="434922"/>
    <lineage>
        <taxon>Bacteria</taxon>
        <taxon>Pseudomonadati</taxon>
        <taxon>Pseudomonadota</taxon>
        <taxon>Gammaproteobacteria</taxon>
        <taxon>Legionellales</taxon>
        <taxon>Coxiellaceae</taxon>
        <taxon>Coxiella</taxon>
    </lineage>
</organism>
<name>RS21_COXBN</name>
<gene>
    <name evidence="1" type="primary">rpsU</name>
    <name type="ordered locus">CBUD_0396</name>
</gene>
<protein>
    <recommendedName>
        <fullName evidence="1">Small ribosomal subunit protein bS21</fullName>
    </recommendedName>
    <alternativeName>
        <fullName evidence="2">30S ribosomal protein S21</fullName>
    </alternativeName>
</protein>
<comment type="similarity">
    <text evidence="1">Belongs to the bacterial ribosomal protein bS21 family.</text>
</comment>
<comment type="sequence caution" evidence="2">
    <conflict type="erroneous initiation">
        <sequence resource="EMBL-CDS" id="ABS77864"/>
    </conflict>
</comment>
<evidence type="ECO:0000255" key="1">
    <source>
        <dbReference type="HAMAP-Rule" id="MF_00358"/>
    </source>
</evidence>
<evidence type="ECO:0000305" key="2"/>
<proteinExistence type="inferred from homology"/>